<sequence>MDKFYNYNSSSNQALLNLKVKPDSKQNLISDFVIINNLPYLKLFIKTAPEQGKANEEIINYLAKAWKLSRSNIEIIKGHTHSLKTILIKNIDEDYLNSIINSYIK</sequence>
<evidence type="ECO:0000255" key="1">
    <source>
        <dbReference type="HAMAP-Rule" id="MF_00634"/>
    </source>
</evidence>
<dbReference type="EMBL" id="CP000409">
    <property type="protein sequence ID" value="ABV73992.1"/>
    <property type="molecule type" value="Genomic_DNA"/>
</dbReference>
<dbReference type="RefSeq" id="WP_012149187.1">
    <property type="nucleotide sequence ID" value="NC_009879.1"/>
</dbReference>
<dbReference type="SMR" id="A8F059"/>
<dbReference type="STRING" id="293613.A1E_05380"/>
<dbReference type="KEGG" id="rcm:A1E_05380"/>
<dbReference type="eggNOG" id="COG1872">
    <property type="taxonomic scope" value="Bacteria"/>
</dbReference>
<dbReference type="HOGENOM" id="CLU_130694_6_2_5"/>
<dbReference type="Proteomes" id="UP000007056">
    <property type="component" value="Chromosome"/>
</dbReference>
<dbReference type="GO" id="GO:0005737">
    <property type="term" value="C:cytoplasm"/>
    <property type="evidence" value="ECO:0007669"/>
    <property type="project" value="TreeGrafter"/>
</dbReference>
<dbReference type="Gene3D" id="3.30.1200.10">
    <property type="entry name" value="YggU-like"/>
    <property type="match status" value="1"/>
</dbReference>
<dbReference type="HAMAP" id="MF_00634">
    <property type="entry name" value="UPF0235"/>
    <property type="match status" value="1"/>
</dbReference>
<dbReference type="InterPro" id="IPR003746">
    <property type="entry name" value="DUF167"/>
</dbReference>
<dbReference type="InterPro" id="IPR036591">
    <property type="entry name" value="YggU-like_sf"/>
</dbReference>
<dbReference type="NCBIfam" id="TIGR00251">
    <property type="entry name" value="DUF167 family protein"/>
    <property type="match status" value="1"/>
</dbReference>
<dbReference type="NCBIfam" id="NF002419">
    <property type="entry name" value="PRK01530.1"/>
    <property type="match status" value="1"/>
</dbReference>
<dbReference type="PANTHER" id="PTHR13420">
    <property type="entry name" value="UPF0235 PROTEIN C15ORF40"/>
    <property type="match status" value="1"/>
</dbReference>
<dbReference type="PANTHER" id="PTHR13420:SF7">
    <property type="entry name" value="UPF0235 PROTEIN C15ORF40"/>
    <property type="match status" value="1"/>
</dbReference>
<dbReference type="Pfam" id="PF02594">
    <property type="entry name" value="DUF167"/>
    <property type="match status" value="1"/>
</dbReference>
<dbReference type="SMART" id="SM01152">
    <property type="entry name" value="DUF167"/>
    <property type="match status" value="1"/>
</dbReference>
<dbReference type="SUPFAM" id="SSF69786">
    <property type="entry name" value="YggU-like"/>
    <property type="match status" value="1"/>
</dbReference>
<reference key="1">
    <citation type="submission" date="2007-09" db="EMBL/GenBank/DDBJ databases">
        <title>Complete genome sequence of Rickettsia canadensis.</title>
        <authorList>
            <person name="Madan A."/>
            <person name="Fahey J."/>
            <person name="Helton E."/>
            <person name="Ketteman M."/>
            <person name="Madan A."/>
            <person name="Rodrigues S."/>
            <person name="Sanchez A."/>
            <person name="Whiting M."/>
            <person name="Dasch G."/>
            <person name="Eremeeva M."/>
        </authorList>
    </citation>
    <scope>NUCLEOTIDE SEQUENCE [LARGE SCALE GENOMIC DNA]</scope>
    <source>
        <strain>McKiel</strain>
    </source>
</reference>
<proteinExistence type="inferred from homology"/>
<protein>
    <recommendedName>
        <fullName evidence="1">UPF0235 protein A1E_05380</fullName>
    </recommendedName>
</protein>
<name>Y5380_RICCK</name>
<organism>
    <name type="scientific">Rickettsia canadensis (strain McKiel)</name>
    <dbReference type="NCBI Taxonomy" id="293613"/>
    <lineage>
        <taxon>Bacteria</taxon>
        <taxon>Pseudomonadati</taxon>
        <taxon>Pseudomonadota</taxon>
        <taxon>Alphaproteobacteria</taxon>
        <taxon>Rickettsiales</taxon>
        <taxon>Rickettsiaceae</taxon>
        <taxon>Rickettsieae</taxon>
        <taxon>Rickettsia</taxon>
        <taxon>belli group</taxon>
    </lineage>
</organism>
<feature type="chain" id="PRO_1000056784" description="UPF0235 protein A1E_05380">
    <location>
        <begin position="1"/>
        <end position="105"/>
    </location>
</feature>
<comment type="similarity">
    <text evidence="1">Belongs to the UPF0235 family.</text>
</comment>
<accession>A8F059</accession>
<gene>
    <name type="ordered locus">A1E_05380</name>
</gene>